<evidence type="ECO:0000255" key="1">
    <source>
        <dbReference type="HAMAP-Rule" id="MF_00439"/>
    </source>
</evidence>
<reference key="1">
    <citation type="journal article" date="2001" name="Plant Mol. Biol.">
        <title>The plastid chromosome of spinach (Spinacia oleracea): complete nucleotide sequence and gene organization.</title>
        <authorList>
            <person name="Schmitz-Linneweber C."/>
            <person name="Maier R.M."/>
            <person name="Alcaraz J.-P."/>
            <person name="Cottet A."/>
            <person name="Herrmann R.G."/>
            <person name="Mache R."/>
        </authorList>
    </citation>
    <scope>NUCLEOTIDE SEQUENCE [LARGE SCALE GENOMIC DNA]</scope>
    <source>
        <strain>cv. Geant d'hiver</strain>
        <strain>cv. Monatol</strain>
    </source>
</reference>
<gene>
    <name evidence="1" type="primary">ycf3</name>
</gene>
<name>YCF3_SPIOL</name>
<dbReference type="EMBL" id="AJ400848">
    <property type="protein sequence ID" value="CAB88727.1"/>
    <property type="molecule type" value="Genomic_DNA"/>
</dbReference>
<dbReference type="RefSeq" id="NP_054934.1">
    <property type="nucleotide sequence ID" value="NC_002202.1"/>
</dbReference>
<dbReference type="SMR" id="Q9M3M5"/>
<dbReference type="FunCoup" id="Q9M3M5">
    <property type="interactions" value="24"/>
</dbReference>
<dbReference type="STRING" id="3562.Q9M3M5"/>
<dbReference type="GeneID" id="2715690"/>
<dbReference type="KEGG" id="soe:2715690"/>
<dbReference type="InParanoid" id="Q9M3M5"/>
<dbReference type="OrthoDB" id="431027at2759"/>
<dbReference type="Proteomes" id="UP001155700">
    <property type="component" value="Chloroplast Pltd"/>
</dbReference>
<dbReference type="GO" id="GO:0009535">
    <property type="term" value="C:chloroplast thylakoid membrane"/>
    <property type="evidence" value="ECO:0007669"/>
    <property type="project" value="UniProtKB-SubCell"/>
</dbReference>
<dbReference type="GO" id="GO:0048564">
    <property type="term" value="P:photosystem I assembly"/>
    <property type="evidence" value="ECO:0000318"/>
    <property type="project" value="GO_Central"/>
</dbReference>
<dbReference type="FunFam" id="1.25.40.10:FF:000004">
    <property type="entry name" value="Photosystem I assembly protein Ycf3"/>
    <property type="match status" value="1"/>
</dbReference>
<dbReference type="Gene3D" id="1.25.40.10">
    <property type="entry name" value="Tetratricopeptide repeat domain"/>
    <property type="match status" value="1"/>
</dbReference>
<dbReference type="HAMAP" id="MF_00439">
    <property type="entry name" value="Ycf3"/>
    <property type="match status" value="1"/>
</dbReference>
<dbReference type="InterPro" id="IPR022818">
    <property type="entry name" value="PSI_Ycf3_assembly"/>
</dbReference>
<dbReference type="InterPro" id="IPR011990">
    <property type="entry name" value="TPR-like_helical_dom_sf"/>
</dbReference>
<dbReference type="InterPro" id="IPR019734">
    <property type="entry name" value="TPR_rpt"/>
</dbReference>
<dbReference type="InterPro" id="IPR051685">
    <property type="entry name" value="Ycf3/AcsC/BcsC/TPR_MFPF"/>
</dbReference>
<dbReference type="NCBIfam" id="NF002725">
    <property type="entry name" value="PRK02603.1"/>
    <property type="match status" value="1"/>
</dbReference>
<dbReference type="PANTHER" id="PTHR44943">
    <property type="entry name" value="CELLULOSE SYNTHASE OPERON PROTEIN C"/>
    <property type="match status" value="1"/>
</dbReference>
<dbReference type="PANTHER" id="PTHR44943:SF8">
    <property type="entry name" value="TPR REPEAT-CONTAINING PROTEIN MJ0263"/>
    <property type="match status" value="1"/>
</dbReference>
<dbReference type="Pfam" id="PF00515">
    <property type="entry name" value="TPR_1"/>
    <property type="match status" value="1"/>
</dbReference>
<dbReference type="SMART" id="SM00028">
    <property type="entry name" value="TPR"/>
    <property type="match status" value="3"/>
</dbReference>
<dbReference type="SUPFAM" id="SSF48452">
    <property type="entry name" value="TPR-like"/>
    <property type="match status" value="1"/>
</dbReference>
<dbReference type="PROSITE" id="PS50005">
    <property type="entry name" value="TPR"/>
    <property type="match status" value="3"/>
</dbReference>
<dbReference type="PROSITE" id="PS50293">
    <property type="entry name" value="TPR_REGION"/>
    <property type="match status" value="2"/>
</dbReference>
<organism>
    <name type="scientific">Spinacia oleracea</name>
    <name type="common">Spinach</name>
    <dbReference type="NCBI Taxonomy" id="3562"/>
    <lineage>
        <taxon>Eukaryota</taxon>
        <taxon>Viridiplantae</taxon>
        <taxon>Streptophyta</taxon>
        <taxon>Embryophyta</taxon>
        <taxon>Tracheophyta</taxon>
        <taxon>Spermatophyta</taxon>
        <taxon>Magnoliopsida</taxon>
        <taxon>eudicotyledons</taxon>
        <taxon>Gunneridae</taxon>
        <taxon>Pentapetalae</taxon>
        <taxon>Caryophyllales</taxon>
        <taxon>Chenopodiaceae</taxon>
        <taxon>Chenopodioideae</taxon>
        <taxon>Anserineae</taxon>
        <taxon>Spinacia</taxon>
    </lineage>
</organism>
<keyword id="KW-0150">Chloroplast</keyword>
<keyword id="KW-0472">Membrane</keyword>
<keyword id="KW-0602">Photosynthesis</keyword>
<keyword id="KW-0934">Plastid</keyword>
<keyword id="KW-1185">Reference proteome</keyword>
<keyword id="KW-0677">Repeat</keyword>
<keyword id="KW-0793">Thylakoid</keyword>
<keyword id="KW-0802">TPR repeat</keyword>
<feature type="chain" id="PRO_0000217824" description="Photosystem I assembly protein Ycf3">
    <location>
        <begin position="1"/>
        <end position="165"/>
    </location>
</feature>
<feature type="repeat" description="TPR 1">
    <location>
        <begin position="32"/>
        <end position="65"/>
    </location>
</feature>
<feature type="repeat" description="TPR 2">
    <location>
        <begin position="69"/>
        <end position="102"/>
    </location>
</feature>
<feature type="repeat" description="TPR 3">
    <location>
        <begin position="117"/>
        <end position="150"/>
    </location>
</feature>
<protein>
    <recommendedName>
        <fullName evidence="1">Photosystem I assembly protein Ycf3</fullName>
    </recommendedName>
</protein>
<proteinExistence type="inferred from homology"/>
<accession>Q9M3M5</accession>
<sequence>MSRNGNFIDKTFSVVANILLQIIPTTSGEKEAFTYYRDGMSAQSEGNYAEALQNYYEAMRLEIDPYDRSYILYNIGLIHTSNGEHTKALEYYFRALERNPFLPQAFNNMAVICHYRGEQAIRQGDSEIAEAWFDQAAEYWKQALTLTPGNYIEAHNWLKITGRFE</sequence>
<geneLocation type="chloroplast"/>
<comment type="function">
    <text evidence="1">Essential for the assembly of the photosystem I (PSI) complex. May act as a chaperone-like factor to guide the assembly of the PSI subunits.</text>
</comment>
<comment type="subcellular location">
    <subcellularLocation>
        <location evidence="1">Plastid</location>
        <location evidence="1">Chloroplast thylakoid membrane</location>
        <topology evidence="1">Peripheral membrane protein</topology>
    </subcellularLocation>
</comment>
<comment type="similarity">
    <text evidence="1">Belongs to the Ycf3 family.</text>
</comment>